<reference key="1">
    <citation type="journal article" date="2007" name="Nat. Biotechnol.">
        <title>Comparative analysis of the complete genome sequence of the plant growth-promoting bacterium Bacillus amyloliquefaciens FZB42.</title>
        <authorList>
            <person name="Chen X.H."/>
            <person name="Koumoutsi A."/>
            <person name="Scholz R."/>
            <person name="Eisenreich A."/>
            <person name="Schneider K."/>
            <person name="Heinemeyer I."/>
            <person name="Morgenstern B."/>
            <person name="Voss B."/>
            <person name="Hess W.R."/>
            <person name="Reva O."/>
            <person name="Junge H."/>
            <person name="Voigt B."/>
            <person name="Jungblut P.R."/>
            <person name="Vater J."/>
            <person name="Suessmuth R."/>
            <person name="Liesegang H."/>
            <person name="Strittmatter A."/>
            <person name="Gottschalk G."/>
            <person name="Borriss R."/>
        </authorList>
    </citation>
    <scope>NUCLEOTIDE SEQUENCE [LARGE SCALE GENOMIC DNA]</scope>
    <source>
        <strain>DSM 23117 / BGSC 10A6 / LMG 26770 / FZB42</strain>
    </source>
</reference>
<proteinExistence type="inferred from homology"/>
<feature type="chain" id="PRO_1000054063" description="Cyclic pyranopterin monophosphate synthase">
    <location>
        <begin position="1"/>
        <end position="170"/>
    </location>
</feature>
<feature type="active site" evidence="1">
    <location>
        <position position="130"/>
    </location>
</feature>
<feature type="binding site" evidence="1">
    <location>
        <begin position="75"/>
        <end position="77"/>
    </location>
    <ligand>
        <name>substrate</name>
    </ligand>
</feature>
<feature type="binding site" evidence="1">
    <location>
        <begin position="115"/>
        <end position="116"/>
    </location>
    <ligand>
        <name>substrate</name>
    </ligand>
</feature>
<organism>
    <name type="scientific">Bacillus velezensis (strain DSM 23117 / BGSC 10A6 / LMG 26770 / FZB42)</name>
    <name type="common">Bacillus amyloliquefaciens subsp. plantarum</name>
    <dbReference type="NCBI Taxonomy" id="326423"/>
    <lineage>
        <taxon>Bacteria</taxon>
        <taxon>Bacillati</taxon>
        <taxon>Bacillota</taxon>
        <taxon>Bacilli</taxon>
        <taxon>Bacillales</taxon>
        <taxon>Bacillaceae</taxon>
        <taxon>Bacillus</taxon>
        <taxon>Bacillus amyloliquefaciens group</taxon>
    </lineage>
</organism>
<gene>
    <name evidence="1" type="primary">moaC</name>
    <name type="ordered locus">RBAM_006410</name>
</gene>
<name>MOAC_BACVZ</name>
<keyword id="KW-0456">Lyase</keyword>
<keyword id="KW-0501">Molybdenum cofactor biosynthesis</keyword>
<sequence>MNGFSHFNEEGRARMVDISDKSSTVRTAAAISSVHMKHDVYSRIKNREIGKGDVLAVAQVAGIMAAKQTSAIIPMCHPLSLSSVDISFGWEEKDSEAVLHIQASVKTKGSTGVEMEALTSASVCALTVYDMCKALDKGMVIGPTCLMEKTGGKNGDFKRDASEYKVEDQS</sequence>
<evidence type="ECO:0000255" key="1">
    <source>
        <dbReference type="HAMAP-Rule" id="MF_01224"/>
    </source>
</evidence>
<accession>A7Z200</accession>
<comment type="function">
    <text evidence="1">Catalyzes the conversion of (8S)-3',8-cyclo-7,8-dihydroguanosine 5'-triphosphate to cyclic pyranopterin monophosphate (cPMP).</text>
</comment>
<comment type="catalytic activity">
    <reaction evidence="1">
        <text>(8S)-3',8-cyclo-7,8-dihydroguanosine 5'-triphosphate = cyclic pyranopterin phosphate + diphosphate</text>
        <dbReference type="Rhea" id="RHEA:49580"/>
        <dbReference type="ChEBI" id="CHEBI:33019"/>
        <dbReference type="ChEBI" id="CHEBI:59648"/>
        <dbReference type="ChEBI" id="CHEBI:131766"/>
        <dbReference type="EC" id="4.6.1.17"/>
    </reaction>
</comment>
<comment type="pathway">
    <text evidence="1">Cofactor biosynthesis; molybdopterin biosynthesis.</text>
</comment>
<comment type="subunit">
    <text evidence="1">Homohexamer; trimer of dimers.</text>
</comment>
<comment type="similarity">
    <text evidence="1">Belongs to the MoaC family.</text>
</comment>
<protein>
    <recommendedName>
        <fullName evidence="1">Cyclic pyranopterin monophosphate synthase</fullName>
        <ecNumber evidence="1">4.6.1.17</ecNumber>
    </recommendedName>
    <alternativeName>
        <fullName evidence="1">Molybdenum cofactor biosynthesis protein C</fullName>
    </alternativeName>
</protein>
<dbReference type="EC" id="4.6.1.17" evidence="1"/>
<dbReference type="EMBL" id="CP000560">
    <property type="protein sequence ID" value="ABS73026.1"/>
    <property type="molecule type" value="Genomic_DNA"/>
</dbReference>
<dbReference type="RefSeq" id="WP_003155986.1">
    <property type="nucleotide sequence ID" value="NC_009725.2"/>
</dbReference>
<dbReference type="SMR" id="A7Z200"/>
<dbReference type="GeneID" id="93079776"/>
<dbReference type="KEGG" id="bay:RBAM_006410"/>
<dbReference type="HOGENOM" id="CLU_074693_1_1_9"/>
<dbReference type="UniPathway" id="UPA00344"/>
<dbReference type="Proteomes" id="UP000001120">
    <property type="component" value="Chromosome"/>
</dbReference>
<dbReference type="GO" id="GO:0061799">
    <property type="term" value="F:cyclic pyranopterin monophosphate synthase activity"/>
    <property type="evidence" value="ECO:0007669"/>
    <property type="project" value="UniProtKB-UniRule"/>
</dbReference>
<dbReference type="GO" id="GO:0006777">
    <property type="term" value="P:Mo-molybdopterin cofactor biosynthetic process"/>
    <property type="evidence" value="ECO:0007669"/>
    <property type="project" value="UniProtKB-UniRule"/>
</dbReference>
<dbReference type="CDD" id="cd01420">
    <property type="entry name" value="MoaC_PE"/>
    <property type="match status" value="1"/>
</dbReference>
<dbReference type="Gene3D" id="3.30.70.640">
    <property type="entry name" value="Molybdopterin cofactor biosynthesis C (MoaC) domain"/>
    <property type="match status" value="1"/>
</dbReference>
<dbReference type="HAMAP" id="MF_01224_B">
    <property type="entry name" value="MoaC_B"/>
    <property type="match status" value="1"/>
</dbReference>
<dbReference type="InterPro" id="IPR023045">
    <property type="entry name" value="MoaC"/>
</dbReference>
<dbReference type="InterPro" id="IPR047594">
    <property type="entry name" value="MoaC_bact/euk"/>
</dbReference>
<dbReference type="InterPro" id="IPR036522">
    <property type="entry name" value="MoaC_sf"/>
</dbReference>
<dbReference type="InterPro" id="IPR050105">
    <property type="entry name" value="MoCo_biosynth_MoaA/MoaC"/>
</dbReference>
<dbReference type="InterPro" id="IPR002820">
    <property type="entry name" value="Mopterin_CF_biosynth-C_dom"/>
</dbReference>
<dbReference type="NCBIfam" id="TIGR00581">
    <property type="entry name" value="moaC"/>
    <property type="match status" value="1"/>
</dbReference>
<dbReference type="NCBIfam" id="NF006870">
    <property type="entry name" value="PRK09364.1"/>
    <property type="match status" value="1"/>
</dbReference>
<dbReference type="PANTHER" id="PTHR22960:SF29">
    <property type="entry name" value="CYCLIC PYRANOPTERIN MONOPHOSPHATE SYNTHASE"/>
    <property type="match status" value="1"/>
</dbReference>
<dbReference type="PANTHER" id="PTHR22960">
    <property type="entry name" value="MOLYBDOPTERIN COFACTOR SYNTHESIS PROTEIN A"/>
    <property type="match status" value="1"/>
</dbReference>
<dbReference type="Pfam" id="PF01967">
    <property type="entry name" value="MoaC"/>
    <property type="match status" value="1"/>
</dbReference>
<dbReference type="SUPFAM" id="SSF55040">
    <property type="entry name" value="Molybdenum cofactor biosynthesis protein C, MoaC"/>
    <property type="match status" value="1"/>
</dbReference>